<comment type="caution">
    <text evidence="2">Product of a dubious gene prediction.</text>
</comment>
<keyword id="KW-1185">Reference proteome</keyword>
<evidence type="ECO:0000256" key="1">
    <source>
        <dbReference type="SAM" id="MobiDB-lite"/>
    </source>
</evidence>
<evidence type="ECO:0000305" key="2"/>
<name>Y9575_DICDI</name>
<accession>Q54FX8</accession>
<gene>
    <name type="ORF">DDB_G0290655</name>
</gene>
<reference key="1">
    <citation type="journal article" date="2005" name="Nature">
        <title>The genome of the social amoeba Dictyostelium discoideum.</title>
        <authorList>
            <person name="Eichinger L."/>
            <person name="Pachebat J.A."/>
            <person name="Gloeckner G."/>
            <person name="Rajandream M.A."/>
            <person name="Sucgang R."/>
            <person name="Berriman M."/>
            <person name="Song J."/>
            <person name="Olsen R."/>
            <person name="Szafranski K."/>
            <person name="Xu Q."/>
            <person name="Tunggal B."/>
            <person name="Kummerfeld S."/>
            <person name="Madera M."/>
            <person name="Konfortov B.A."/>
            <person name="Rivero F."/>
            <person name="Bankier A.T."/>
            <person name="Lehmann R."/>
            <person name="Hamlin N."/>
            <person name="Davies R."/>
            <person name="Gaudet P."/>
            <person name="Fey P."/>
            <person name="Pilcher K."/>
            <person name="Chen G."/>
            <person name="Saunders D."/>
            <person name="Sodergren E.J."/>
            <person name="Davis P."/>
            <person name="Kerhornou A."/>
            <person name="Nie X."/>
            <person name="Hall N."/>
            <person name="Anjard C."/>
            <person name="Hemphill L."/>
            <person name="Bason N."/>
            <person name="Farbrother P."/>
            <person name="Desany B."/>
            <person name="Just E."/>
            <person name="Morio T."/>
            <person name="Rost R."/>
            <person name="Churcher C.M."/>
            <person name="Cooper J."/>
            <person name="Haydock S."/>
            <person name="van Driessche N."/>
            <person name="Cronin A."/>
            <person name="Goodhead I."/>
            <person name="Muzny D.M."/>
            <person name="Mourier T."/>
            <person name="Pain A."/>
            <person name="Lu M."/>
            <person name="Harper D."/>
            <person name="Lindsay R."/>
            <person name="Hauser H."/>
            <person name="James K.D."/>
            <person name="Quiles M."/>
            <person name="Madan Babu M."/>
            <person name="Saito T."/>
            <person name="Buchrieser C."/>
            <person name="Wardroper A."/>
            <person name="Felder M."/>
            <person name="Thangavelu M."/>
            <person name="Johnson D."/>
            <person name="Knights A."/>
            <person name="Loulseged H."/>
            <person name="Mungall K.L."/>
            <person name="Oliver K."/>
            <person name="Price C."/>
            <person name="Quail M.A."/>
            <person name="Urushihara H."/>
            <person name="Hernandez J."/>
            <person name="Rabbinowitsch E."/>
            <person name="Steffen D."/>
            <person name="Sanders M."/>
            <person name="Ma J."/>
            <person name="Kohara Y."/>
            <person name="Sharp S."/>
            <person name="Simmonds M.N."/>
            <person name="Spiegler S."/>
            <person name="Tivey A."/>
            <person name="Sugano S."/>
            <person name="White B."/>
            <person name="Walker D."/>
            <person name="Woodward J.R."/>
            <person name="Winckler T."/>
            <person name="Tanaka Y."/>
            <person name="Shaulsky G."/>
            <person name="Schleicher M."/>
            <person name="Weinstock G.M."/>
            <person name="Rosenthal A."/>
            <person name="Cox E.C."/>
            <person name="Chisholm R.L."/>
            <person name="Gibbs R.A."/>
            <person name="Loomis W.F."/>
            <person name="Platzer M."/>
            <person name="Kay R.R."/>
            <person name="Williams J.G."/>
            <person name="Dear P.H."/>
            <person name="Noegel A.A."/>
            <person name="Barrell B.G."/>
            <person name="Kuspa A."/>
        </authorList>
    </citation>
    <scope>NUCLEOTIDE SEQUENCE [LARGE SCALE GENOMIC DNA]</scope>
    <source>
        <strain>AX4</strain>
    </source>
</reference>
<proteinExistence type="uncertain"/>
<organism>
    <name type="scientific">Dictyostelium discoideum</name>
    <name type="common">Social amoeba</name>
    <dbReference type="NCBI Taxonomy" id="44689"/>
    <lineage>
        <taxon>Eukaryota</taxon>
        <taxon>Amoebozoa</taxon>
        <taxon>Evosea</taxon>
        <taxon>Eumycetozoa</taxon>
        <taxon>Dictyostelia</taxon>
        <taxon>Dictyosteliales</taxon>
        <taxon>Dictyosteliaceae</taxon>
        <taxon>Dictyostelium</taxon>
    </lineage>
</organism>
<dbReference type="EMBL" id="AAFI02000164">
    <property type="protein sequence ID" value="EAL62188.1"/>
    <property type="molecule type" value="Genomic_DNA"/>
</dbReference>
<dbReference type="RefSeq" id="XP_635639.1">
    <property type="nucleotide sequence ID" value="XM_630547.1"/>
</dbReference>
<dbReference type="PaxDb" id="44689-DDB0219575"/>
<dbReference type="EnsemblProtists" id="EAL62188">
    <property type="protein sequence ID" value="EAL62188"/>
    <property type="gene ID" value="DDB_G0290655"/>
</dbReference>
<dbReference type="GeneID" id="8627711"/>
<dbReference type="KEGG" id="ddi:DDB_G0290655"/>
<dbReference type="dictyBase" id="DDB_G0290655"/>
<dbReference type="HOGENOM" id="CLU_3280652_0_0_1"/>
<dbReference type="InParanoid" id="Q54FX8"/>
<dbReference type="Proteomes" id="UP000002195">
    <property type="component" value="Chromosome 5"/>
</dbReference>
<feature type="chain" id="PRO_0000346910" description="Putative uncharacterized protein DDB_G0290655">
    <location>
        <begin position="1"/>
        <end position="41"/>
    </location>
</feature>
<feature type="region of interest" description="Disordered" evidence="1">
    <location>
        <begin position="19"/>
        <end position="41"/>
    </location>
</feature>
<sequence>MMNLSYNSKSKATVIFVSNSTRNSSSSSRSSYSSRTTVFSL</sequence>
<protein>
    <recommendedName>
        <fullName>Putative uncharacterized protein DDB_G0290655</fullName>
    </recommendedName>
</protein>